<keyword id="KW-0067">ATP-binding</keyword>
<keyword id="KW-0436">Ligase</keyword>
<keyword id="KW-0547">Nucleotide-binding</keyword>
<keyword id="KW-1185">Reference proteome</keyword>
<keyword id="KW-0833">Ubl conjugation pathway</keyword>
<comment type="function">
    <text evidence="3">Catalytic subunit of the dimeric Uba3-APP-BP1 E1 enzyme. E1 activates Nedd8 by first adenylating its C-terminal glycine residue with ATP, thereafter linking this residue to the side chain of the catalytic cysteine, yielding a Nedd8-Uba3 thioester and free AMP. E1 finally transfers Nedd8 to the catalytic cysteine of UbcE2M. Required for Cul1 and Cul3 neddylation. Negatively regulates full-length ci stability and hedgehog signaling.</text>
</comment>
<comment type="catalytic activity">
    <reaction>
        <text>ATP + [NEDD8 protein] + [E1 NEDD8-activating enzyme]-L-cysteine = AMP + diphosphate + [E1 NEDD8-activating enzyme]-S-[NEDD8 protein]-yl-L-cysteine.</text>
        <dbReference type="EC" id="6.2.1.64"/>
    </reaction>
</comment>
<comment type="pathway">
    <text>Protein modification; protein neddylation.</text>
</comment>
<comment type="subunit">
    <text evidence="3">Heterodimer of Uba3 and APP-BP1. Interacts with Nedd8 and UbcE2M.</text>
</comment>
<comment type="tissue specificity">
    <text evidence="3">Expressed in the wing disk.</text>
</comment>
<comment type="similarity">
    <text evidence="4">Belongs to the ubiquitin-activating E1 family. UBA3 subfamily.</text>
</comment>
<comment type="sequence caution" evidence="4">
    <conflict type="erroneous initiation">
        <sequence resource="EMBL-CDS" id="AAK93440"/>
    </conflict>
</comment>
<comment type="sequence caution" evidence="4">
    <conflict type="erroneous initiation">
        <sequence resource="EMBL-CDS" id="AAY85113"/>
    </conflict>
</comment>
<accession>Q9V6U8</accession>
<accession>Q4QPQ3</accession>
<accession>Q960K2</accession>
<sequence>MSVHSPNPGLILQSKRFNGLRNILEREGPFCKDGFAASSENLEFLQTKCQVLIIGAGGLGCELLKDLALMGFGNLHVIDMDTIELSNLNRQFLFRRTDIGASKAECAARFINARVPTCRVTPHFKKIQDFDESFYQQFHLVVCGLDSIVARRWINGMLLSMLRYEEDGTIDTSSIVPMIDGGTEGFKGNARVILPGFTACIECTLDLFPPQVNYPLCTIANTPRLPEHCIEYVKIIQWEKQNPFGVPLDGDDPQHIGWIYERALERSNEFNITGVTYRLVQGVVKHIIPAVASTNAAIAAACALEVFKLATSCYDSMANYLNFNDLDGIYTYTYEAEKSENCLACSNTPQPLPIEDPNTTTLEDVIKLLCDSPRFQLKSPALTTVMKDGKRRTLYMSGVKSIEEATRKNLTQSLGELGLHDGQQLTVTDATSPSAMTLQLKYQSNEVEMV</sequence>
<organism>
    <name type="scientific">Drosophila melanogaster</name>
    <name type="common">Fruit fly</name>
    <dbReference type="NCBI Taxonomy" id="7227"/>
    <lineage>
        <taxon>Eukaryota</taxon>
        <taxon>Metazoa</taxon>
        <taxon>Ecdysozoa</taxon>
        <taxon>Arthropoda</taxon>
        <taxon>Hexapoda</taxon>
        <taxon>Insecta</taxon>
        <taxon>Pterygota</taxon>
        <taxon>Neoptera</taxon>
        <taxon>Endopterygota</taxon>
        <taxon>Diptera</taxon>
        <taxon>Brachycera</taxon>
        <taxon>Muscomorpha</taxon>
        <taxon>Ephydroidea</taxon>
        <taxon>Drosophilidae</taxon>
        <taxon>Drosophila</taxon>
        <taxon>Sophophora</taxon>
    </lineage>
</organism>
<evidence type="ECO:0000250" key="1"/>
<evidence type="ECO:0000255" key="2">
    <source>
        <dbReference type="PROSITE-ProRule" id="PRU10132"/>
    </source>
</evidence>
<evidence type="ECO:0000269" key="3">
    <source>
    </source>
</evidence>
<evidence type="ECO:0000305" key="4"/>
<protein>
    <recommendedName>
        <fullName>Nedd8-activating enzyme E1 catalytic subunit</fullName>
        <ecNumber>6.2.1.64</ecNumber>
    </recommendedName>
    <alternativeName>
        <fullName>Ubiquitin-activating enzyme 3 homolog</fullName>
    </alternativeName>
</protein>
<dbReference type="EC" id="6.2.1.64"/>
<dbReference type="EMBL" id="AE013599">
    <property type="protein sequence ID" value="AAF58323.1"/>
    <property type="molecule type" value="Genomic_DNA"/>
</dbReference>
<dbReference type="EMBL" id="BT023713">
    <property type="protein sequence ID" value="AAY85113.1"/>
    <property type="status" value="ALT_INIT"/>
    <property type="molecule type" value="mRNA"/>
</dbReference>
<dbReference type="EMBL" id="AY052016">
    <property type="protein sequence ID" value="AAK93440.1"/>
    <property type="status" value="ALT_INIT"/>
    <property type="molecule type" value="mRNA"/>
</dbReference>
<dbReference type="RefSeq" id="NP_610913.1">
    <property type="nucleotide sequence ID" value="NM_137069.4"/>
</dbReference>
<dbReference type="SMR" id="Q9V6U8"/>
<dbReference type="BioGRID" id="62293">
    <property type="interactions" value="5"/>
</dbReference>
<dbReference type="FunCoup" id="Q9V6U8">
    <property type="interactions" value="2891"/>
</dbReference>
<dbReference type="IntAct" id="Q9V6U8">
    <property type="interactions" value="3"/>
</dbReference>
<dbReference type="STRING" id="7227.FBpp0086711"/>
<dbReference type="PaxDb" id="7227-FBpp0086711"/>
<dbReference type="DNASU" id="36539"/>
<dbReference type="EnsemblMetazoa" id="FBtr0087585">
    <property type="protein sequence ID" value="FBpp0086711"/>
    <property type="gene ID" value="FBgn0263697"/>
</dbReference>
<dbReference type="GeneID" id="36539"/>
<dbReference type="KEGG" id="dme:Dmel_CG13343"/>
<dbReference type="UCSC" id="CG13343-RA">
    <property type="organism name" value="d. melanogaster"/>
</dbReference>
<dbReference type="AGR" id="FB:FBgn0263697"/>
<dbReference type="CTD" id="9039"/>
<dbReference type="FlyBase" id="FBgn0263697">
    <property type="gene designation" value="Uba3"/>
</dbReference>
<dbReference type="VEuPathDB" id="VectorBase:FBgn0263697"/>
<dbReference type="eggNOG" id="KOG2015">
    <property type="taxonomic scope" value="Eukaryota"/>
</dbReference>
<dbReference type="GeneTree" id="ENSGT00550000074831"/>
<dbReference type="HOGENOM" id="CLU_013325_13_1_1"/>
<dbReference type="InParanoid" id="Q9V6U8"/>
<dbReference type="OMA" id="PYLENYM"/>
<dbReference type="OrthoDB" id="5977743at2759"/>
<dbReference type="PhylomeDB" id="Q9V6U8"/>
<dbReference type="Reactome" id="R-DME-8951664">
    <property type="pathway name" value="Neddylation"/>
</dbReference>
<dbReference type="Reactome" id="R-DME-983168">
    <property type="pathway name" value="Antigen processing: Ubiquitination &amp; Proteasome degradation"/>
</dbReference>
<dbReference type="SignaLink" id="Q9V6U8"/>
<dbReference type="UniPathway" id="UPA00885"/>
<dbReference type="BioGRID-ORCS" id="36539">
    <property type="hits" value="0 hits in 1 CRISPR screen"/>
</dbReference>
<dbReference type="GenomeRNAi" id="36539"/>
<dbReference type="PRO" id="PR:Q9V6U8"/>
<dbReference type="Proteomes" id="UP000000803">
    <property type="component" value="Chromosome 2R"/>
</dbReference>
<dbReference type="Bgee" id="FBgn0263697">
    <property type="expression patterns" value="Expressed in egg chamber and 64 other cell types or tissues"/>
</dbReference>
<dbReference type="GO" id="GO:0005737">
    <property type="term" value="C:cytoplasm"/>
    <property type="evidence" value="ECO:0000318"/>
    <property type="project" value="GO_Central"/>
</dbReference>
<dbReference type="GO" id="GO:0120500">
    <property type="term" value="C:NAE1-UBA3 complex"/>
    <property type="evidence" value="ECO:0000353"/>
    <property type="project" value="FlyBase"/>
</dbReference>
<dbReference type="GO" id="GO:0005634">
    <property type="term" value="C:nucleus"/>
    <property type="evidence" value="ECO:0000318"/>
    <property type="project" value="GO_Central"/>
</dbReference>
<dbReference type="GO" id="GO:0005524">
    <property type="term" value="F:ATP binding"/>
    <property type="evidence" value="ECO:0007669"/>
    <property type="project" value="UniProtKB-KW"/>
</dbReference>
<dbReference type="GO" id="GO:0019781">
    <property type="term" value="F:NEDD8 activating enzyme activity"/>
    <property type="evidence" value="ECO:0007669"/>
    <property type="project" value="UniProtKB-EC"/>
</dbReference>
<dbReference type="GO" id="GO:0045879">
    <property type="term" value="P:negative regulation of smoothened signaling pathway"/>
    <property type="evidence" value="ECO:0000315"/>
    <property type="project" value="FlyBase"/>
</dbReference>
<dbReference type="GO" id="GO:0061059">
    <property type="term" value="P:positive regulation of peptidoglycan recognition protein signaling pathway"/>
    <property type="evidence" value="ECO:0000315"/>
    <property type="project" value="FlyBase"/>
</dbReference>
<dbReference type="GO" id="GO:0045116">
    <property type="term" value="P:protein neddylation"/>
    <property type="evidence" value="ECO:0000314"/>
    <property type="project" value="FlyBase"/>
</dbReference>
<dbReference type="CDD" id="cd01488">
    <property type="entry name" value="Uba3_RUB"/>
    <property type="match status" value="1"/>
</dbReference>
<dbReference type="FunFam" id="1.10.10.520:FF:000001">
    <property type="entry name" value="NEDD8-activating enzyme E1 catalytic subunit"/>
    <property type="match status" value="1"/>
</dbReference>
<dbReference type="FunFam" id="3.10.290.20:FF:000001">
    <property type="entry name" value="NEDD8-activating enzyme E1 catalytic subunit, variant"/>
    <property type="match status" value="1"/>
</dbReference>
<dbReference type="FunFam" id="3.50.50.80:FF:000002">
    <property type="entry name" value="SUMO-activating enzyme subunit 2"/>
    <property type="match status" value="1"/>
</dbReference>
<dbReference type="Gene3D" id="3.40.50.720">
    <property type="entry name" value="NAD(P)-binding Rossmann-like Domain"/>
    <property type="match status" value="1"/>
</dbReference>
<dbReference type="Gene3D" id="1.10.10.520">
    <property type="entry name" value="Ubiquitin activating enzymes (Uba3). Chain: B, domain 2"/>
    <property type="match status" value="1"/>
</dbReference>
<dbReference type="Gene3D" id="3.10.290.20">
    <property type="entry name" value="Ubiquitin-like 2 activating enzyme e1b. Chain: B, domain 3"/>
    <property type="match status" value="1"/>
</dbReference>
<dbReference type="InterPro" id="IPR014929">
    <property type="entry name" value="E2-binding"/>
</dbReference>
<dbReference type="InterPro" id="IPR045886">
    <property type="entry name" value="ThiF/MoeB/HesA"/>
</dbReference>
<dbReference type="InterPro" id="IPR000594">
    <property type="entry name" value="ThiF_NAD_FAD-bd"/>
</dbReference>
<dbReference type="InterPro" id="IPR023318">
    <property type="entry name" value="Ub_act_enz_dom_a_sf"/>
</dbReference>
<dbReference type="InterPro" id="IPR030468">
    <property type="entry name" value="Uba3_N"/>
</dbReference>
<dbReference type="InterPro" id="IPR035985">
    <property type="entry name" value="Ubiquitin-activating_enz"/>
</dbReference>
<dbReference type="InterPro" id="IPR033127">
    <property type="entry name" value="UBQ-activ_enz_E1_Cys_AS"/>
</dbReference>
<dbReference type="PANTHER" id="PTHR10953:SF6">
    <property type="entry name" value="NEDD8-ACTIVATING ENZYME E1 CATALYTIC SUBUNIT"/>
    <property type="match status" value="1"/>
</dbReference>
<dbReference type="PANTHER" id="PTHR10953">
    <property type="entry name" value="UBIQUITIN-ACTIVATING ENZYME E1"/>
    <property type="match status" value="1"/>
</dbReference>
<dbReference type="Pfam" id="PF08825">
    <property type="entry name" value="E2_bind"/>
    <property type="match status" value="1"/>
</dbReference>
<dbReference type="Pfam" id="PF00899">
    <property type="entry name" value="ThiF"/>
    <property type="match status" value="1"/>
</dbReference>
<dbReference type="SMART" id="SM01181">
    <property type="entry name" value="E2_bind"/>
    <property type="match status" value="1"/>
</dbReference>
<dbReference type="SUPFAM" id="SSF69572">
    <property type="entry name" value="Activating enzymes of the ubiquitin-like proteins"/>
    <property type="match status" value="1"/>
</dbReference>
<dbReference type="PROSITE" id="PS00865">
    <property type="entry name" value="UBIQUITIN_ACTIVAT_2"/>
    <property type="match status" value="1"/>
</dbReference>
<feature type="chain" id="PRO_0000194946" description="Nedd8-activating enzyme E1 catalytic subunit">
    <location>
        <begin position="1"/>
        <end position="450"/>
    </location>
</feature>
<feature type="active site" description="Glycyl thioester intermediate" evidence="2">
    <location>
        <position position="217"/>
    </location>
</feature>
<feature type="binding site" evidence="1">
    <location>
        <begin position="58"/>
        <end position="82"/>
    </location>
    <ligand>
        <name>ATP</name>
        <dbReference type="ChEBI" id="CHEBI:30616"/>
    </ligand>
</feature>
<reference key="1">
    <citation type="journal article" date="2000" name="Science">
        <title>The genome sequence of Drosophila melanogaster.</title>
        <authorList>
            <person name="Adams M.D."/>
            <person name="Celniker S.E."/>
            <person name="Holt R.A."/>
            <person name="Evans C.A."/>
            <person name="Gocayne J.D."/>
            <person name="Amanatides P.G."/>
            <person name="Scherer S.E."/>
            <person name="Li P.W."/>
            <person name="Hoskins R.A."/>
            <person name="Galle R.F."/>
            <person name="George R.A."/>
            <person name="Lewis S.E."/>
            <person name="Richards S."/>
            <person name="Ashburner M."/>
            <person name="Henderson S.N."/>
            <person name="Sutton G.G."/>
            <person name="Wortman J.R."/>
            <person name="Yandell M.D."/>
            <person name="Zhang Q."/>
            <person name="Chen L.X."/>
            <person name="Brandon R.C."/>
            <person name="Rogers Y.-H.C."/>
            <person name="Blazej R.G."/>
            <person name="Champe M."/>
            <person name="Pfeiffer B.D."/>
            <person name="Wan K.H."/>
            <person name="Doyle C."/>
            <person name="Baxter E.G."/>
            <person name="Helt G."/>
            <person name="Nelson C.R."/>
            <person name="Miklos G.L.G."/>
            <person name="Abril J.F."/>
            <person name="Agbayani A."/>
            <person name="An H.-J."/>
            <person name="Andrews-Pfannkoch C."/>
            <person name="Baldwin D."/>
            <person name="Ballew R.M."/>
            <person name="Basu A."/>
            <person name="Baxendale J."/>
            <person name="Bayraktaroglu L."/>
            <person name="Beasley E.M."/>
            <person name="Beeson K.Y."/>
            <person name="Benos P.V."/>
            <person name="Berman B.P."/>
            <person name="Bhandari D."/>
            <person name="Bolshakov S."/>
            <person name="Borkova D."/>
            <person name="Botchan M.R."/>
            <person name="Bouck J."/>
            <person name="Brokstein P."/>
            <person name="Brottier P."/>
            <person name="Burtis K.C."/>
            <person name="Busam D.A."/>
            <person name="Butler H."/>
            <person name="Cadieu E."/>
            <person name="Center A."/>
            <person name="Chandra I."/>
            <person name="Cherry J.M."/>
            <person name="Cawley S."/>
            <person name="Dahlke C."/>
            <person name="Davenport L.B."/>
            <person name="Davies P."/>
            <person name="de Pablos B."/>
            <person name="Delcher A."/>
            <person name="Deng Z."/>
            <person name="Mays A.D."/>
            <person name="Dew I."/>
            <person name="Dietz S.M."/>
            <person name="Dodson K."/>
            <person name="Doup L.E."/>
            <person name="Downes M."/>
            <person name="Dugan-Rocha S."/>
            <person name="Dunkov B.C."/>
            <person name="Dunn P."/>
            <person name="Durbin K.J."/>
            <person name="Evangelista C.C."/>
            <person name="Ferraz C."/>
            <person name="Ferriera S."/>
            <person name="Fleischmann W."/>
            <person name="Fosler C."/>
            <person name="Gabrielian A.E."/>
            <person name="Garg N.S."/>
            <person name="Gelbart W.M."/>
            <person name="Glasser K."/>
            <person name="Glodek A."/>
            <person name="Gong F."/>
            <person name="Gorrell J.H."/>
            <person name="Gu Z."/>
            <person name="Guan P."/>
            <person name="Harris M."/>
            <person name="Harris N.L."/>
            <person name="Harvey D.A."/>
            <person name="Heiman T.J."/>
            <person name="Hernandez J.R."/>
            <person name="Houck J."/>
            <person name="Hostin D."/>
            <person name="Houston K.A."/>
            <person name="Howland T.J."/>
            <person name="Wei M.-H."/>
            <person name="Ibegwam C."/>
            <person name="Jalali M."/>
            <person name="Kalush F."/>
            <person name="Karpen G.H."/>
            <person name="Ke Z."/>
            <person name="Kennison J.A."/>
            <person name="Ketchum K.A."/>
            <person name="Kimmel B.E."/>
            <person name="Kodira C.D."/>
            <person name="Kraft C.L."/>
            <person name="Kravitz S."/>
            <person name="Kulp D."/>
            <person name="Lai Z."/>
            <person name="Lasko P."/>
            <person name="Lei Y."/>
            <person name="Levitsky A.A."/>
            <person name="Li J.H."/>
            <person name="Li Z."/>
            <person name="Liang Y."/>
            <person name="Lin X."/>
            <person name="Liu X."/>
            <person name="Mattei B."/>
            <person name="McIntosh T.C."/>
            <person name="McLeod M.P."/>
            <person name="McPherson D."/>
            <person name="Merkulov G."/>
            <person name="Milshina N.V."/>
            <person name="Mobarry C."/>
            <person name="Morris J."/>
            <person name="Moshrefi A."/>
            <person name="Mount S.M."/>
            <person name="Moy M."/>
            <person name="Murphy B."/>
            <person name="Murphy L."/>
            <person name="Muzny D.M."/>
            <person name="Nelson D.L."/>
            <person name="Nelson D.R."/>
            <person name="Nelson K.A."/>
            <person name="Nixon K."/>
            <person name="Nusskern D.R."/>
            <person name="Pacleb J.M."/>
            <person name="Palazzolo M."/>
            <person name="Pittman G.S."/>
            <person name="Pan S."/>
            <person name="Pollard J."/>
            <person name="Puri V."/>
            <person name="Reese M.G."/>
            <person name="Reinert K."/>
            <person name="Remington K."/>
            <person name="Saunders R.D.C."/>
            <person name="Scheeler F."/>
            <person name="Shen H."/>
            <person name="Shue B.C."/>
            <person name="Siden-Kiamos I."/>
            <person name="Simpson M."/>
            <person name="Skupski M.P."/>
            <person name="Smith T.J."/>
            <person name="Spier E."/>
            <person name="Spradling A.C."/>
            <person name="Stapleton M."/>
            <person name="Strong R."/>
            <person name="Sun E."/>
            <person name="Svirskas R."/>
            <person name="Tector C."/>
            <person name="Turner R."/>
            <person name="Venter E."/>
            <person name="Wang A.H."/>
            <person name="Wang X."/>
            <person name="Wang Z.-Y."/>
            <person name="Wassarman D.A."/>
            <person name="Weinstock G.M."/>
            <person name="Weissenbach J."/>
            <person name="Williams S.M."/>
            <person name="Woodage T."/>
            <person name="Worley K.C."/>
            <person name="Wu D."/>
            <person name="Yang S."/>
            <person name="Yao Q.A."/>
            <person name="Ye J."/>
            <person name="Yeh R.-F."/>
            <person name="Zaveri J.S."/>
            <person name="Zhan M."/>
            <person name="Zhang G."/>
            <person name="Zhao Q."/>
            <person name="Zheng L."/>
            <person name="Zheng X.H."/>
            <person name="Zhong F.N."/>
            <person name="Zhong W."/>
            <person name="Zhou X."/>
            <person name="Zhu S.C."/>
            <person name="Zhu X."/>
            <person name="Smith H.O."/>
            <person name="Gibbs R.A."/>
            <person name="Myers E.W."/>
            <person name="Rubin G.M."/>
            <person name="Venter J.C."/>
        </authorList>
    </citation>
    <scope>NUCLEOTIDE SEQUENCE [LARGE SCALE GENOMIC DNA]</scope>
    <source>
        <strain>Berkeley</strain>
    </source>
</reference>
<reference key="2">
    <citation type="journal article" date="2002" name="Genome Biol.">
        <title>Annotation of the Drosophila melanogaster euchromatic genome: a systematic review.</title>
        <authorList>
            <person name="Misra S."/>
            <person name="Crosby M.A."/>
            <person name="Mungall C.J."/>
            <person name="Matthews B.B."/>
            <person name="Campbell K.S."/>
            <person name="Hradecky P."/>
            <person name="Huang Y."/>
            <person name="Kaminker J.S."/>
            <person name="Millburn G.H."/>
            <person name="Prochnik S.E."/>
            <person name="Smith C.D."/>
            <person name="Tupy J.L."/>
            <person name="Whitfield E.J."/>
            <person name="Bayraktaroglu L."/>
            <person name="Berman B.P."/>
            <person name="Bettencourt B.R."/>
            <person name="Celniker S.E."/>
            <person name="de Grey A.D.N.J."/>
            <person name="Drysdale R.A."/>
            <person name="Harris N.L."/>
            <person name="Richter J."/>
            <person name="Russo S."/>
            <person name="Schroeder A.J."/>
            <person name="Shu S.Q."/>
            <person name="Stapleton M."/>
            <person name="Yamada C."/>
            <person name="Ashburner M."/>
            <person name="Gelbart W.M."/>
            <person name="Rubin G.M."/>
            <person name="Lewis S.E."/>
        </authorList>
    </citation>
    <scope>GENOME REANNOTATION</scope>
    <source>
        <strain>Berkeley</strain>
    </source>
</reference>
<reference key="3">
    <citation type="submission" date="2005-06" db="EMBL/GenBank/DDBJ databases">
        <authorList>
            <person name="Stapleton M."/>
            <person name="Carlson J.W."/>
            <person name="Chavez C."/>
            <person name="Frise E."/>
            <person name="George R.A."/>
            <person name="Pacleb J.M."/>
            <person name="Park S."/>
            <person name="Wan K.H."/>
            <person name="Yu C."/>
            <person name="Celniker S.E."/>
        </authorList>
    </citation>
    <scope>NUCLEOTIDE SEQUENCE [LARGE SCALE MRNA]</scope>
    <source>
        <strain>Berkeley</strain>
    </source>
</reference>
<reference key="4">
    <citation type="journal article" date="2002" name="Genome Biol.">
        <title>A Drosophila full-length cDNA resource.</title>
        <authorList>
            <person name="Stapleton M."/>
            <person name="Carlson J.W."/>
            <person name="Brokstein P."/>
            <person name="Yu C."/>
            <person name="Champe M."/>
            <person name="George R.A."/>
            <person name="Guarin H."/>
            <person name="Kronmiller B."/>
            <person name="Pacleb J.M."/>
            <person name="Park S."/>
            <person name="Wan K.H."/>
            <person name="Rubin G.M."/>
            <person name="Celniker S.E."/>
        </authorList>
    </citation>
    <scope>NUCLEOTIDE SEQUENCE [LARGE SCALE MRNA] OF 4-450</scope>
    <source>
        <strain>Berkeley</strain>
        <tissue>Embryo</tissue>
    </source>
</reference>
<reference key="5">
    <citation type="journal article" date="2011" name="PLoS ONE">
        <title>In vivo RNAi screen reveals neddylation genes as novel regulators of Hedgehog signaling.</title>
        <authorList>
            <person name="Du J."/>
            <person name="Zhang J."/>
            <person name="Su Y."/>
            <person name="Liu M."/>
            <person name="Ospina J.K."/>
            <person name="Yang S."/>
            <person name="Zhu A.J."/>
        </authorList>
    </citation>
    <scope>FUNCTION</scope>
    <scope>INTERACTION WITH APP-BP1</scope>
    <scope>TISSUE SPECIFICITY</scope>
</reference>
<proteinExistence type="evidence at protein level"/>
<gene>
    <name type="primary">Uba3</name>
    <name type="ORF">CG13343</name>
</gene>
<name>UBA3_DROME</name>